<name>RB11C_DICDI</name>
<feature type="chain" id="PRO_0000312422" description="Ras-related protein Rab-11C">
    <location>
        <begin position="1"/>
        <end position="224"/>
    </location>
</feature>
<feature type="region of interest" description="Disordered" evidence="2">
    <location>
        <begin position="194"/>
        <end position="224"/>
    </location>
</feature>
<feature type="short sequence motif" description="Effector region" evidence="1">
    <location>
        <begin position="39"/>
        <end position="47"/>
    </location>
</feature>
<feature type="binding site" evidence="1">
    <location>
        <begin position="17"/>
        <end position="24"/>
    </location>
    <ligand>
        <name>GTP</name>
        <dbReference type="ChEBI" id="CHEBI:37565"/>
    </ligand>
</feature>
<feature type="binding site" evidence="1">
    <location>
        <begin position="65"/>
        <end position="69"/>
    </location>
    <ligand>
        <name>GTP</name>
        <dbReference type="ChEBI" id="CHEBI:37565"/>
    </ligand>
</feature>
<feature type="binding site" evidence="1">
    <location>
        <begin position="123"/>
        <end position="126"/>
    </location>
    <ligand>
        <name>GTP</name>
        <dbReference type="ChEBI" id="CHEBI:37565"/>
    </ligand>
</feature>
<feature type="lipid moiety-binding region" description="S-geranylgeranyl cysteine" evidence="1">
    <location>
        <position position="223"/>
    </location>
</feature>
<feature type="lipid moiety-binding region" description="S-geranylgeranyl cysteine" evidence="1">
    <location>
        <position position="224"/>
    </location>
</feature>
<comment type="subcellular location">
    <subcellularLocation>
        <location evidence="1">Membrane</location>
        <topology evidence="1">Lipid-anchor</topology>
    </subcellularLocation>
</comment>
<comment type="similarity">
    <text evidence="3">Belongs to the small GTPase superfamily. Rab family.</text>
</comment>
<organism>
    <name type="scientific">Dictyostelium discoideum</name>
    <name type="common">Social amoeba</name>
    <dbReference type="NCBI Taxonomy" id="44689"/>
    <lineage>
        <taxon>Eukaryota</taxon>
        <taxon>Amoebozoa</taxon>
        <taxon>Evosea</taxon>
        <taxon>Eumycetozoa</taxon>
        <taxon>Dictyostelia</taxon>
        <taxon>Dictyosteliales</taxon>
        <taxon>Dictyosteliaceae</taxon>
        <taxon>Dictyostelium</taxon>
    </lineage>
</organism>
<accession>Q550H6</accession>
<reference key="1">
    <citation type="journal article" date="2002" name="Nature">
        <title>Sequence and analysis of chromosome 2 of Dictyostelium discoideum.</title>
        <authorList>
            <person name="Gloeckner G."/>
            <person name="Eichinger L."/>
            <person name="Szafranski K."/>
            <person name="Pachebat J.A."/>
            <person name="Bankier A.T."/>
            <person name="Dear P.H."/>
            <person name="Lehmann R."/>
            <person name="Baumgart C."/>
            <person name="Parra G."/>
            <person name="Abril J.F."/>
            <person name="Guigo R."/>
            <person name="Kumpf K."/>
            <person name="Tunggal B."/>
            <person name="Cox E.C."/>
            <person name="Quail M.A."/>
            <person name="Platzer M."/>
            <person name="Rosenthal A."/>
            <person name="Noegel A.A."/>
        </authorList>
    </citation>
    <scope>NUCLEOTIDE SEQUENCE [LARGE SCALE GENOMIC DNA]</scope>
    <source>
        <strain>AX4</strain>
    </source>
</reference>
<reference key="2">
    <citation type="journal article" date="2005" name="Nature">
        <title>The genome of the social amoeba Dictyostelium discoideum.</title>
        <authorList>
            <person name="Eichinger L."/>
            <person name="Pachebat J.A."/>
            <person name="Gloeckner G."/>
            <person name="Rajandream M.A."/>
            <person name="Sucgang R."/>
            <person name="Berriman M."/>
            <person name="Song J."/>
            <person name="Olsen R."/>
            <person name="Szafranski K."/>
            <person name="Xu Q."/>
            <person name="Tunggal B."/>
            <person name="Kummerfeld S."/>
            <person name="Madera M."/>
            <person name="Konfortov B.A."/>
            <person name="Rivero F."/>
            <person name="Bankier A.T."/>
            <person name="Lehmann R."/>
            <person name="Hamlin N."/>
            <person name="Davies R."/>
            <person name="Gaudet P."/>
            <person name="Fey P."/>
            <person name="Pilcher K."/>
            <person name="Chen G."/>
            <person name="Saunders D."/>
            <person name="Sodergren E.J."/>
            <person name="Davis P."/>
            <person name="Kerhornou A."/>
            <person name="Nie X."/>
            <person name="Hall N."/>
            <person name="Anjard C."/>
            <person name="Hemphill L."/>
            <person name="Bason N."/>
            <person name="Farbrother P."/>
            <person name="Desany B."/>
            <person name="Just E."/>
            <person name="Morio T."/>
            <person name="Rost R."/>
            <person name="Churcher C.M."/>
            <person name="Cooper J."/>
            <person name="Haydock S."/>
            <person name="van Driessche N."/>
            <person name="Cronin A."/>
            <person name="Goodhead I."/>
            <person name="Muzny D.M."/>
            <person name="Mourier T."/>
            <person name="Pain A."/>
            <person name="Lu M."/>
            <person name="Harper D."/>
            <person name="Lindsay R."/>
            <person name="Hauser H."/>
            <person name="James K.D."/>
            <person name="Quiles M."/>
            <person name="Madan Babu M."/>
            <person name="Saito T."/>
            <person name="Buchrieser C."/>
            <person name="Wardroper A."/>
            <person name="Felder M."/>
            <person name="Thangavelu M."/>
            <person name="Johnson D."/>
            <person name="Knights A."/>
            <person name="Loulseged H."/>
            <person name="Mungall K.L."/>
            <person name="Oliver K."/>
            <person name="Price C."/>
            <person name="Quail M.A."/>
            <person name="Urushihara H."/>
            <person name="Hernandez J."/>
            <person name="Rabbinowitsch E."/>
            <person name="Steffen D."/>
            <person name="Sanders M."/>
            <person name="Ma J."/>
            <person name="Kohara Y."/>
            <person name="Sharp S."/>
            <person name="Simmonds M.N."/>
            <person name="Spiegler S."/>
            <person name="Tivey A."/>
            <person name="Sugano S."/>
            <person name="White B."/>
            <person name="Walker D."/>
            <person name="Woodward J.R."/>
            <person name="Winckler T."/>
            <person name="Tanaka Y."/>
            <person name="Shaulsky G."/>
            <person name="Schleicher M."/>
            <person name="Weinstock G.M."/>
            <person name="Rosenthal A."/>
            <person name="Cox E.C."/>
            <person name="Chisholm R.L."/>
            <person name="Gibbs R.A."/>
            <person name="Loomis W.F."/>
            <person name="Platzer M."/>
            <person name="Kay R.R."/>
            <person name="Williams J.G."/>
            <person name="Dear P.H."/>
            <person name="Noegel A.A."/>
            <person name="Barrell B.G."/>
            <person name="Kuspa A."/>
        </authorList>
    </citation>
    <scope>NUCLEOTIDE SEQUENCE [LARGE SCALE GENOMIC DNA]</scope>
    <source>
        <strain>AX4</strain>
    </source>
</reference>
<reference key="3">
    <citation type="journal article" date="2006" name="Mol. Cell. Proteomics">
        <title>Proteomics fingerprinting of phagosome maturation and evidence for the role of a Galpha during uptake.</title>
        <authorList>
            <person name="Gotthardt D."/>
            <person name="Blancheteau V."/>
            <person name="Bosserhoff A."/>
            <person name="Ruppert T."/>
            <person name="Delorenzi M."/>
            <person name="Soldati T."/>
        </authorList>
    </citation>
    <scope>IDENTIFICATION BY MASS SPECTROMETRY [LARGE SCALE ANALYSIS]</scope>
    <source>
        <strain>AX2</strain>
    </source>
</reference>
<evidence type="ECO:0000250" key="1"/>
<evidence type="ECO:0000256" key="2">
    <source>
        <dbReference type="SAM" id="MobiDB-lite"/>
    </source>
</evidence>
<evidence type="ECO:0000305" key="3"/>
<gene>
    <name type="primary">rab11C</name>
    <name type="ORF">DDB_G0277101</name>
</gene>
<sequence length="224" mass="25119">MPQEEEAEYLFKIVIIGDSAVGKSNLLNRFTRNEFTEKTKATIGVDFGTKSIEIDNKTITAQCWDTAGQERFRAVTSGYYRGAVGAMIVYDITSKISFKNVTRWLNELREMAEQDILIMMVGNKSDLEMSREVPTKEAQAFAESNKISFLETSALNSTNVNQSFERLLTDIYHLVSSKKPMVVDDTQNWLVPNQGKKLTPLSDPAPQLTANTTSTHQEKKSGCC</sequence>
<dbReference type="EMBL" id="AAFI02000019">
    <property type="protein sequence ID" value="EAL69052.1"/>
    <property type="molecule type" value="Genomic_DNA"/>
</dbReference>
<dbReference type="RefSeq" id="XP_642956.1">
    <property type="nucleotide sequence ID" value="XM_637864.1"/>
</dbReference>
<dbReference type="SMR" id="Q550H6"/>
<dbReference type="FunCoup" id="Q550H6">
    <property type="interactions" value="83"/>
</dbReference>
<dbReference type="IntAct" id="Q550H6">
    <property type="interactions" value="1"/>
</dbReference>
<dbReference type="MINT" id="Q550H6"/>
<dbReference type="STRING" id="44689.Q550H6"/>
<dbReference type="GlyGen" id="Q550H6">
    <property type="glycosylation" value="1 site"/>
</dbReference>
<dbReference type="PaxDb" id="44689-DDB0229395"/>
<dbReference type="EnsemblProtists" id="EAL69052">
    <property type="protein sequence ID" value="EAL69052"/>
    <property type="gene ID" value="DDB_G0277101"/>
</dbReference>
<dbReference type="GeneID" id="8620825"/>
<dbReference type="KEGG" id="ddi:DDB_G0277101"/>
<dbReference type="dictyBase" id="DDB_G0277101">
    <property type="gene designation" value="rab11C"/>
</dbReference>
<dbReference type="VEuPathDB" id="AmoebaDB:DDB_G0277101"/>
<dbReference type="eggNOG" id="KOG0087">
    <property type="taxonomic scope" value="Eukaryota"/>
</dbReference>
<dbReference type="HOGENOM" id="CLU_041217_23_0_1"/>
<dbReference type="InParanoid" id="Q550H6"/>
<dbReference type="OMA" id="TTHHYRA"/>
<dbReference type="PhylomeDB" id="Q550H6"/>
<dbReference type="PRO" id="PR:Q550H6"/>
<dbReference type="Proteomes" id="UP000002195">
    <property type="component" value="Chromosome 2"/>
</dbReference>
<dbReference type="GO" id="GO:0000331">
    <property type="term" value="C:contractile vacuole"/>
    <property type="evidence" value="ECO:0000314"/>
    <property type="project" value="dictyBase"/>
</dbReference>
<dbReference type="GO" id="GO:0012505">
    <property type="term" value="C:endomembrane system"/>
    <property type="evidence" value="ECO:0000318"/>
    <property type="project" value="GO_Central"/>
</dbReference>
<dbReference type="GO" id="GO:0016020">
    <property type="term" value="C:membrane"/>
    <property type="evidence" value="ECO:0007669"/>
    <property type="project" value="UniProtKB-SubCell"/>
</dbReference>
<dbReference type="GO" id="GO:0140220">
    <property type="term" value="C:pathogen-containing vacuole"/>
    <property type="evidence" value="ECO:0000314"/>
    <property type="project" value="dictyBase"/>
</dbReference>
<dbReference type="GO" id="GO:0005525">
    <property type="term" value="F:GTP binding"/>
    <property type="evidence" value="ECO:0007669"/>
    <property type="project" value="UniProtKB-KW"/>
</dbReference>
<dbReference type="GO" id="GO:0003924">
    <property type="term" value="F:GTPase activity"/>
    <property type="evidence" value="ECO:0000318"/>
    <property type="project" value="GO_Central"/>
</dbReference>
<dbReference type="GO" id="GO:0006886">
    <property type="term" value="P:intracellular protein transport"/>
    <property type="evidence" value="ECO:0000318"/>
    <property type="project" value="GO_Central"/>
</dbReference>
<dbReference type="CDD" id="cd01868">
    <property type="entry name" value="Rab11_like"/>
    <property type="match status" value="1"/>
</dbReference>
<dbReference type="FunFam" id="3.40.50.300:FF:000274">
    <property type="entry name" value="ras-related protein RABA5a"/>
    <property type="match status" value="1"/>
</dbReference>
<dbReference type="Gene3D" id="3.40.50.300">
    <property type="entry name" value="P-loop containing nucleotide triphosphate hydrolases"/>
    <property type="match status" value="1"/>
</dbReference>
<dbReference type="InterPro" id="IPR027417">
    <property type="entry name" value="P-loop_NTPase"/>
</dbReference>
<dbReference type="InterPro" id="IPR050209">
    <property type="entry name" value="Rab_GTPases_membrane_traffic"/>
</dbReference>
<dbReference type="InterPro" id="IPR005225">
    <property type="entry name" value="Small_GTP-bd"/>
</dbReference>
<dbReference type="InterPro" id="IPR001806">
    <property type="entry name" value="Small_GTPase"/>
</dbReference>
<dbReference type="NCBIfam" id="TIGR00231">
    <property type="entry name" value="small_GTP"/>
    <property type="match status" value="1"/>
</dbReference>
<dbReference type="PANTHER" id="PTHR47979">
    <property type="entry name" value="DRAB11-RELATED"/>
    <property type="match status" value="1"/>
</dbReference>
<dbReference type="Pfam" id="PF00071">
    <property type="entry name" value="Ras"/>
    <property type="match status" value="1"/>
</dbReference>
<dbReference type="PRINTS" id="PR00449">
    <property type="entry name" value="RASTRNSFRMNG"/>
</dbReference>
<dbReference type="SMART" id="SM00175">
    <property type="entry name" value="RAB"/>
    <property type="match status" value="1"/>
</dbReference>
<dbReference type="SMART" id="SM00176">
    <property type="entry name" value="RAN"/>
    <property type="match status" value="1"/>
</dbReference>
<dbReference type="SMART" id="SM00173">
    <property type="entry name" value="RAS"/>
    <property type="match status" value="1"/>
</dbReference>
<dbReference type="SMART" id="SM00174">
    <property type="entry name" value="RHO"/>
    <property type="match status" value="1"/>
</dbReference>
<dbReference type="SUPFAM" id="SSF52540">
    <property type="entry name" value="P-loop containing nucleoside triphosphate hydrolases"/>
    <property type="match status" value="1"/>
</dbReference>
<dbReference type="PROSITE" id="PS51419">
    <property type="entry name" value="RAB"/>
    <property type="match status" value="1"/>
</dbReference>
<keyword id="KW-0342">GTP-binding</keyword>
<keyword id="KW-0449">Lipoprotein</keyword>
<keyword id="KW-0472">Membrane</keyword>
<keyword id="KW-0547">Nucleotide-binding</keyword>
<keyword id="KW-0636">Prenylation</keyword>
<keyword id="KW-1185">Reference proteome</keyword>
<proteinExistence type="evidence at protein level"/>
<protein>
    <recommendedName>
        <fullName>Ras-related protein Rab-11C</fullName>
    </recommendedName>
</protein>